<organism>
    <name type="scientific">Human herpesvirus 6B (strain Z29)</name>
    <name type="common">HHV-6 variant B</name>
    <name type="synonym">Human B lymphotropic virus</name>
    <dbReference type="NCBI Taxonomy" id="36351"/>
    <lineage>
        <taxon>Viruses</taxon>
        <taxon>Duplodnaviria</taxon>
        <taxon>Heunggongvirae</taxon>
        <taxon>Peploviricota</taxon>
        <taxon>Herviviricetes</taxon>
        <taxon>Herpesvirales</taxon>
        <taxon>Orthoherpesviridae</taxon>
        <taxon>Betaherpesvirinae</taxon>
        <taxon>Roseolovirus</taxon>
        <taxon>Roseolovirus humanbeta6b</taxon>
        <taxon>Human herpesvirus 6B</taxon>
    </lineage>
</organism>
<proteinExistence type="inferred from homology"/>
<gene>
    <name type="primary">U59</name>
</gene>
<organismHost>
    <name type="scientific">Homo sapiens</name>
    <name type="common">Human</name>
    <dbReference type="NCBI Taxonomy" id="9606"/>
</organismHost>
<reference key="1">
    <citation type="journal article" date="1999" name="J. Virol.">
        <title>Human herpesvirus 6B genome sequence: coding content and comparison with human herpesvirus 6A.</title>
        <authorList>
            <person name="Dominguez G."/>
            <person name="Dambaugh T.R."/>
            <person name="Stamey F.R."/>
            <person name="Dewhurst S."/>
            <person name="Inoue N."/>
            <person name="Pellett P.E."/>
        </authorList>
    </citation>
    <scope>NUCLEOTIDE SEQUENCE [LARGE SCALE GENOMIC DNA]</scope>
</reference>
<feature type="chain" id="PRO_0000408440" description="Protein U59">
    <location>
        <begin position="1"/>
        <end position="350"/>
    </location>
</feature>
<accession>Q9QJ24</accession>
<keyword id="KW-1185">Reference proteome</keyword>
<sequence length="350" mass="39987">MNVPMADEWFDCAIRLDSETIAVHEIFNSDLSKLLNLHSKTVYMSDLCAFISGCVNRNVGKLTIYWHVYGDIIYALTGILHCVKITIECGERIADGRYRLYEIPKLFLMRGQSTPLELKWKHAVGIATTNKPLLTHVLTDVLETSPFTLPDTLLSVQELSIFRERLSYIYYVLGLDVDIVARTEREIFQKCAELARLQQVFLIQGNIMENFVLVQACLFQLGADGLWEEMSGSVRPRPELMSSAFIQHRVMVNNCYCLAVIFNAIYKHKVSLPTVERSHEIVHRVVQEYYKSYVNAPLSVLVCATKVLTLFTEEYNFQSALVFVSQFFQVDVEASRADVIRLFLACLKGD</sequence>
<dbReference type="EMBL" id="AF157706">
    <property type="protein sequence ID" value="AAD49662.1"/>
    <property type="molecule type" value="Genomic_DNA"/>
</dbReference>
<dbReference type="RefSeq" id="NP_050240.1">
    <property type="nucleotide sequence ID" value="NC_000898.1"/>
</dbReference>
<dbReference type="DNASU" id="1497061"/>
<dbReference type="GeneID" id="1497061"/>
<dbReference type="KEGG" id="vg:1497061"/>
<dbReference type="Proteomes" id="UP000006930">
    <property type="component" value="Segment"/>
</dbReference>
<dbReference type="InterPro" id="IPR007616">
    <property type="entry name" value="Herpes_U59/UL88"/>
</dbReference>
<dbReference type="Pfam" id="PF04529">
    <property type="entry name" value="Herpes_U59"/>
    <property type="match status" value="1"/>
</dbReference>
<name>UL88_HHV6Z</name>
<comment type="similarity">
    <text evidence="1">Belongs to the herpesviridae U59/UL88 family.</text>
</comment>
<evidence type="ECO:0000305" key="1"/>
<protein>
    <recommendedName>
        <fullName>Protein U59</fullName>
    </recommendedName>
</protein>